<gene>
    <name evidence="1" type="primary">rpsD</name>
    <name type="ordered locus">KPN78578_36590</name>
    <name type="ORF">KPN_03696</name>
</gene>
<keyword id="KW-0687">Ribonucleoprotein</keyword>
<keyword id="KW-0689">Ribosomal protein</keyword>
<keyword id="KW-0694">RNA-binding</keyword>
<keyword id="KW-0699">rRNA-binding</keyword>
<comment type="function">
    <text evidence="1">One of the primary rRNA binding proteins, it binds directly to 16S rRNA where it nucleates assembly of the body of the 30S subunit.</text>
</comment>
<comment type="function">
    <text evidence="1">With S5 and S12 plays an important role in translational accuracy.</text>
</comment>
<comment type="subunit">
    <text evidence="1">Part of the 30S ribosomal subunit. Contacts protein S5. The interaction surface between S4 and S5 is involved in control of translational fidelity.</text>
</comment>
<comment type="similarity">
    <text evidence="1">Belongs to the universal ribosomal protein uS4 family.</text>
</comment>
<dbReference type="EMBL" id="CP000647">
    <property type="protein sequence ID" value="ABR79083.1"/>
    <property type="molecule type" value="Genomic_DNA"/>
</dbReference>
<dbReference type="RefSeq" id="WP_002919224.1">
    <property type="nucleotide sequence ID" value="NC_009648.1"/>
</dbReference>
<dbReference type="SMR" id="A6TEU9"/>
<dbReference type="STRING" id="272620.KPN_03696"/>
<dbReference type="jPOST" id="A6TEU9"/>
<dbReference type="PaxDb" id="272620-KPN_03696"/>
<dbReference type="EnsemblBacteria" id="ABR79083">
    <property type="protein sequence ID" value="ABR79083"/>
    <property type="gene ID" value="KPN_03696"/>
</dbReference>
<dbReference type="GeneID" id="93314099"/>
<dbReference type="KEGG" id="kpn:KPN_03696"/>
<dbReference type="HOGENOM" id="CLU_092403_0_2_6"/>
<dbReference type="Proteomes" id="UP000000265">
    <property type="component" value="Chromosome"/>
</dbReference>
<dbReference type="GO" id="GO:0015935">
    <property type="term" value="C:small ribosomal subunit"/>
    <property type="evidence" value="ECO:0007669"/>
    <property type="project" value="InterPro"/>
</dbReference>
<dbReference type="GO" id="GO:0019843">
    <property type="term" value="F:rRNA binding"/>
    <property type="evidence" value="ECO:0007669"/>
    <property type="project" value="UniProtKB-UniRule"/>
</dbReference>
<dbReference type="GO" id="GO:0003735">
    <property type="term" value="F:structural constituent of ribosome"/>
    <property type="evidence" value="ECO:0007669"/>
    <property type="project" value="InterPro"/>
</dbReference>
<dbReference type="GO" id="GO:0042274">
    <property type="term" value="P:ribosomal small subunit biogenesis"/>
    <property type="evidence" value="ECO:0007669"/>
    <property type="project" value="TreeGrafter"/>
</dbReference>
<dbReference type="GO" id="GO:0006412">
    <property type="term" value="P:translation"/>
    <property type="evidence" value="ECO:0007669"/>
    <property type="project" value="UniProtKB-UniRule"/>
</dbReference>
<dbReference type="CDD" id="cd00165">
    <property type="entry name" value="S4"/>
    <property type="match status" value="1"/>
</dbReference>
<dbReference type="FunFam" id="1.10.1050.10:FF:000001">
    <property type="entry name" value="30S ribosomal protein S4"/>
    <property type="match status" value="1"/>
</dbReference>
<dbReference type="FunFam" id="3.10.290.10:FF:000001">
    <property type="entry name" value="30S ribosomal protein S4"/>
    <property type="match status" value="1"/>
</dbReference>
<dbReference type="Gene3D" id="1.10.1050.10">
    <property type="entry name" value="Ribosomal Protein S4 Delta 41, Chain A, domain 1"/>
    <property type="match status" value="1"/>
</dbReference>
<dbReference type="Gene3D" id="3.10.290.10">
    <property type="entry name" value="RNA-binding S4 domain"/>
    <property type="match status" value="1"/>
</dbReference>
<dbReference type="HAMAP" id="MF_01306_B">
    <property type="entry name" value="Ribosomal_uS4_B"/>
    <property type="match status" value="1"/>
</dbReference>
<dbReference type="InterPro" id="IPR022801">
    <property type="entry name" value="Ribosomal_uS4"/>
</dbReference>
<dbReference type="InterPro" id="IPR005709">
    <property type="entry name" value="Ribosomal_uS4_bac-type"/>
</dbReference>
<dbReference type="InterPro" id="IPR018079">
    <property type="entry name" value="Ribosomal_uS4_CS"/>
</dbReference>
<dbReference type="InterPro" id="IPR001912">
    <property type="entry name" value="Ribosomal_uS4_N"/>
</dbReference>
<dbReference type="InterPro" id="IPR002942">
    <property type="entry name" value="S4_RNA-bd"/>
</dbReference>
<dbReference type="InterPro" id="IPR036986">
    <property type="entry name" value="S4_RNA-bd_sf"/>
</dbReference>
<dbReference type="NCBIfam" id="NF003717">
    <property type="entry name" value="PRK05327.1"/>
    <property type="match status" value="1"/>
</dbReference>
<dbReference type="NCBIfam" id="TIGR01017">
    <property type="entry name" value="rpsD_bact"/>
    <property type="match status" value="1"/>
</dbReference>
<dbReference type="PANTHER" id="PTHR11831">
    <property type="entry name" value="30S 40S RIBOSOMAL PROTEIN"/>
    <property type="match status" value="1"/>
</dbReference>
<dbReference type="PANTHER" id="PTHR11831:SF4">
    <property type="entry name" value="SMALL RIBOSOMAL SUBUNIT PROTEIN US4M"/>
    <property type="match status" value="1"/>
</dbReference>
<dbReference type="Pfam" id="PF00163">
    <property type="entry name" value="Ribosomal_S4"/>
    <property type="match status" value="1"/>
</dbReference>
<dbReference type="Pfam" id="PF01479">
    <property type="entry name" value="S4"/>
    <property type="match status" value="1"/>
</dbReference>
<dbReference type="SMART" id="SM01390">
    <property type="entry name" value="Ribosomal_S4"/>
    <property type="match status" value="1"/>
</dbReference>
<dbReference type="SMART" id="SM00363">
    <property type="entry name" value="S4"/>
    <property type="match status" value="1"/>
</dbReference>
<dbReference type="SUPFAM" id="SSF55174">
    <property type="entry name" value="Alpha-L RNA-binding motif"/>
    <property type="match status" value="1"/>
</dbReference>
<dbReference type="PROSITE" id="PS00632">
    <property type="entry name" value="RIBOSOMAL_S4"/>
    <property type="match status" value="1"/>
</dbReference>
<dbReference type="PROSITE" id="PS50889">
    <property type="entry name" value="S4"/>
    <property type="match status" value="1"/>
</dbReference>
<proteinExistence type="inferred from homology"/>
<accession>A6TEU9</accession>
<organism>
    <name type="scientific">Klebsiella pneumoniae subsp. pneumoniae (strain ATCC 700721 / MGH 78578)</name>
    <dbReference type="NCBI Taxonomy" id="272620"/>
    <lineage>
        <taxon>Bacteria</taxon>
        <taxon>Pseudomonadati</taxon>
        <taxon>Pseudomonadota</taxon>
        <taxon>Gammaproteobacteria</taxon>
        <taxon>Enterobacterales</taxon>
        <taxon>Enterobacteriaceae</taxon>
        <taxon>Klebsiella/Raoultella group</taxon>
        <taxon>Klebsiella</taxon>
        <taxon>Klebsiella pneumoniae complex</taxon>
    </lineage>
</organism>
<protein>
    <recommendedName>
        <fullName evidence="1">Small ribosomal subunit protein uS4</fullName>
    </recommendedName>
    <alternativeName>
        <fullName evidence="2">30S ribosomal protein S4</fullName>
    </alternativeName>
</protein>
<feature type="chain" id="PRO_0000322307" description="Small ribosomal subunit protein uS4">
    <location>
        <begin position="1"/>
        <end position="206"/>
    </location>
</feature>
<feature type="domain" description="S4 RNA-binding" evidence="1">
    <location>
        <begin position="96"/>
        <end position="156"/>
    </location>
</feature>
<evidence type="ECO:0000255" key="1">
    <source>
        <dbReference type="HAMAP-Rule" id="MF_01306"/>
    </source>
</evidence>
<evidence type="ECO:0000305" key="2"/>
<sequence length="206" mass="23502">MARYLGPKLKLSRREGTDLFLKSGVRAIDTKCKIEQAPGQHGARKPRLSDYGVQLREKQKVRRMYGVLERQFRNYYKEAARLKGNTGENLLALLEGRLDNVVYRMGFGATRAEARQLVSHKAIMVNGRVVNIASYQVKANDVVSIREKAKKQSRVKAALELAEQREKPTWLEVDAGKMEGTFKRQPERSDLSADINEHLIVELYSK</sequence>
<name>RS4_KLEP7</name>
<reference key="1">
    <citation type="submission" date="2006-09" db="EMBL/GenBank/DDBJ databases">
        <authorList>
            <consortium name="The Klebsiella pneumonia Genome Sequencing Project"/>
            <person name="McClelland M."/>
            <person name="Sanderson E.K."/>
            <person name="Spieth J."/>
            <person name="Clifton W.S."/>
            <person name="Latreille P."/>
            <person name="Sabo A."/>
            <person name="Pepin K."/>
            <person name="Bhonagiri V."/>
            <person name="Porwollik S."/>
            <person name="Ali J."/>
            <person name="Wilson R.K."/>
        </authorList>
    </citation>
    <scope>NUCLEOTIDE SEQUENCE [LARGE SCALE GENOMIC DNA]</scope>
    <source>
        <strain>ATCC 700721 / MGH 78578</strain>
    </source>
</reference>